<accession>O35012</accession>
<accession>Q796L5</accession>
<feature type="signal peptide" evidence="1">
    <location>
        <begin position="1"/>
        <end position="26"/>
    </location>
</feature>
<feature type="chain" id="PRO_0000383596" description="Uncharacterized protein YkoJ">
    <location>
        <begin position="27"/>
        <end position="170"/>
    </location>
</feature>
<gene>
    <name type="primary">ykoJ</name>
    <name type="ordered locus">BSU13280</name>
</gene>
<sequence length="170" mass="18955">MLKKKWMVGLLAGCLAAGGFSYNAFATENNENRQASSKTDALTEQEAEAIAKTVVDGTVEDIDRDLYNGKEVYEVEIEKEGEDYDVYVDIHTKQALNDPLKEKAEQVAITKEEAEEIALKQTGGTVTESKLDEDDGAYIYEMEIQTKQGTETEFEISAKDGRIIKQEIDD</sequence>
<evidence type="ECO:0000255" key="1"/>
<evidence type="ECO:0000269" key="2">
    <source>
    </source>
</evidence>
<evidence type="ECO:0000269" key="3">
    <source>
    </source>
</evidence>
<dbReference type="EMBL" id="AJ002571">
    <property type="protein sequence ID" value="CAA05607.1"/>
    <property type="molecule type" value="Genomic_DNA"/>
</dbReference>
<dbReference type="EMBL" id="AL009126">
    <property type="protein sequence ID" value="CAB13185.1"/>
    <property type="molecule type" value="Genomic_DNA"/>
</dbReference>
<dbReference type="PIR" id="F69859">
    <property type="entry name" value="F69859"/>
</dbReference>
<dbReference type="RefSeq" id="NP_389211.1">
    <property type="nucleotide sequence ID" value="NC_000964.3"/>
</dbReference>
<dbReference type="RefSeq" id="WP_003232544.1">
    <property type="nucleotide sequence ID" value="NZ_OZ025638.1"/>
</dbReference>
<dbReference type="SMR" id="O35012"/>
<dbReference type="FunCoup" id="O35012">
    <property type="interactions" value="2"/>
</dbReference>
<dbReference type="STRING" id="224308.BSU13280"/>
<dbReference type="PaxDb" id="224308-BSU13280"/>
<dbReference type="DNASU" id="936459"/>
<dbReference type="EnsemblBacteria" id="CAB13185">
    <property type="protein sequence ID" value="CAB13185"/>
    <property type="gene ID" value="BSU_13280"/>
</dbReference>
<dbReference type="GeneID" id="936459"/>
<dbReference type="KEGG" id="bsu:BSU13280"/>
<dbReference type="PATRIC" id="fig|224308.179.peg.1442"/>
<dbReference type="eggNOG" id="COG3212">
    <property type="taxonomic scope" value="Bacteria"/>
</dbReference>
<dbReference type="InParanoid" id="O35012"/>
<dbReference type="OrthoDB" id="5361545at2"/>
<dbReference type="BioCyc" id="BSUB:BSU13280-MONOMER"/>
<dbReference type="Proteomes" id="UP000001570">
    <property type="component" value="Chromosome"/>
</dbReference>
<dbReference type="Gene3D" id="3.10.450.40">
    <property type="match status" value="2"/>
</dbReference>
<dbReference type="InterPro" id="IPR025711">
    <property type="entry name" value="PepSY"/>
</dbReference>
<dbReference type="Pfam" id="PF03413">
    <property type="entry name" value="PepSY"/>
    <property type="match status" value="2"/>
</dbReference>
<comment type="developmental stage">
    <text evidence="3">Highly expressed in the late exponential phase.</text>
</comment>
<comment type="induction">
    <text evidence="2 3">Up-regulated under secretion stress conditions in a CssR/CssS-dependent manner.</text>
</comment>
<comment type="disruption phenotype">
    <text evidence="2">Cells lacking this gene show no noteworthy improvement of beta-toxoid secretion.</text>
</comment>
<comment type="miscellaneous">
    <text>Overexpression of ykoJ is lethal to B.subtilis.</text>
</comment>
<name>YKOJ_BACSU</name>
<organism>
    <name type="scientific">Bacillus subtilis (strain 168)</name>
    <dbReference type="NCBI Taxonomy" id="224308"/>
    <lineage>
        <taxon>Bacteria</taxon>
        <taxon>Bacillati</taxon>
        <taxon>Bacillota</taxon>
        <taxon>Bacilli</taxon>
        <taxon>Bacillales</taxon>
        <taxon>Bacillaceae</taxon>
        <taxon>Bacillus</taxon>
    </lineage>
</organism>
<protein>
    <recommendedName>
        <fullName>Uncharacterized protein YkoJ</fullName>
    </recommendedName>
</protein>
<proteinExistence type="evidence at transcript level"/>
<reference key="1">
    <citation type="submission" date="1997-11" db="EMBL/GenBank/DDBJ databases">
        <title>Sequence of the Bacillus subtilis genome between xlyA and ykoR.</title>
        <authorList>
            <person name="Devine K.M."/>
        </authorList>
    </citation>
    <scope>NUCLEOTIDE SEQUENCE [GENOMIC DNA]</scope>
    <source>
        <strain>168</strain>
    </source>
</reference>
<reference key="2">
    <citation type="journal article" date="1997" name="Nature">
        <title>The complete genome sequence of the Gram-positive bacterium Bacillus subtilis.</title>
        <authorList>
            <person name="Kunst F."/>
            <person name="Ogasawara N."/>
            <person name="Moszer I."/>
            <person name="Albertini A.M."/>
            <person name="Alloni G."/>
            <person name="Azevedo V."/>
            <person name="Bertero M.G."/>
            <person name="Bessieres P."/>
            <person name="Bolotin A."/>
            <person name="Borchert S."/>
            <person name="Borriss R."/>
            <person name="Boursier L."/>
            <person name="Brans A."/>
            <person name="Braun M."/>
            <person name="Brignell S.C."/>
            <person name="Bron S."/>
            <person name="Brouillet S."/>
            <person name="Bruschi C.V."/>
            <person name="Caldwell B."/>
            <person name="Capuano V."/>
            <person name="Carter N.M."/>
            <person name="Choi S.-K."/>
            <person name="Codani J.-J."/>
            <person name="Connerton I.F."/>
            <person name="Cummings N.J."/>
            <person name="Daniel R.A."/>
            <person name="Denizot F."/>
            <person name="Devine K.M."/>
            <person name="Duesterhoeft A."/>
            <person name="Ehrlich S.D."/>
            <person name="Emmerson P.T."/>
            <person name="Entian K.-D."/>
            <person name="Errington J."/>
            <person name="Fabret C."/>
            <person name="Ferrari E."/>
            <person name="Foulger D."/>
            <person name="Fritz C."/>
            <person name="Fujita M."/>
            <person name="Fujita Y."/>
            <person name="Fuma S."/>
            <person name="Galizzi A."/>
            <person name="Galleron N."/>
            <person name="Ghim S.-Y."/>
            <person name="Glaser P."/>
            <person name="Goffeau A."/>
            <person name="Golightly E.J."/>
            <person name="Grandi G."/>
            <person name="Guiseppi G."/>
            <person name="Guy B.J."/>
            <person name="Haga K."/>
            <person name="Haiech J."/>
            <person name="Harwood C.R."/>
            <person name="Henaut A."/>
            <person name="Hilbert H."/>
            <person name="Holsappel S."/>
            <person name="Hosono S."/>
            <person name="Hullo M.-F."/>
            <person name="Itaya M."/>
            <person name="Jones L.-M."/>
            <person name="Joris B."/>
            <person name="Karamata D."/>
            <person name="Kasahara Y."/>
            <person name="Klaerr-Blanchard M."/>
            <person name="Klein C."/>
            <person name="Kobayashi Y."/>
            <person name="Koetter P."/>
            <person name="Koningstein G."/>
            <person name="Krogh S."/>
            <person name="Kumano M."/>
            <person name="Kurita K."/>
            <person name="Lapidus A."/>
            <person name="Lardinois S."/>
            <person name="Lauber J."/>
            <person name="Lazarevic V."/>
            <person name="Lee S.-M."/>
            <person name="Levine A."/>
            <person name="Liu H."/>
            <person name="Masuda S."/>
            <person name="Mauel C."/>
            <person name="Medigue C."/>
            <person name="Medina N."/>
            <person name="Mellado R.P."/>
            <person name="Mizuno M."/>
            <person name="Moestl D."/>
            <person name="Nakai S."/>
            <person name="Noback M."/>
            <person name="Noone D."/>
            <person name="O'Reilly M."/>
            <person name="Ogawa K."/>
            <person name="Ogiwara A."/>
            <person name="Oudega B."/>
            <person name="Park S.-H."/>
            <person name="Parro V."/>
            <person name="Pohl T.M."/>
            <person name="Portetelle D."/>
            <person name="Porwollik S."/>
            <person name="Prescott A.M."/>
            <person name="Presecan E."/>
            <person name="Pujic P."/>
            <person name="Purnelle B."/>
            <person name="Rapoport G."/>
            <person name="Rey M."/>
            <person name="Reynolds S."/>
            <person name="Rieger M."/>
            <person name="Rivolta C."/>
            <person name="Rocha E."/>
            <person name="Roche B."/>
            <person name="Rose M."/>
            <person name="Sadaie Y."/>
            <person name="Sato T."/>
            <person name="Scanlan E."/>
            <person name="Schleich S."/>
            <person name="Schroeter R."/>
            <person name="Scoffone F."/>
            <person name="Sekiguchi J."/>
            <person name="Sekowska A."/>
            <person name="Seror S.J."/>
            <person name="Serror P."/>
            <person name="Shin B.-S."/>
            <person name="Soldo B."/>
            <person name="Sorokin A."/>
            <person name="Tacconi E."/>
            <person name="Takagi T."/>
            <person name="Takahashi H."/>
            <person name="Takemaru K."/>
            <person name="Takeuchi M."/>
            <person name="Tamakoshi A."/>
            <person name="Tanaka T."/>
            <person name="Terpstra P."/>
            <person name="Tognoni A."/>
            <person name="Tosato V."/>
            <person name="Uchiyama S."/>
            <person name="Vandenbol M."/>
            <person name="Vannier F."/>
            <person name="Vassarotti A."/>
            <person name="Viari A."/>
            <person name="Wambutt R."/>
            <person name="Wedler E."/>
            <person name="Wedler H."/>
            <person name="Weitzenegger T."/>
            <person name="Winters P."/>
            <person name="Wipat A."/>
            <person name="Yamamoto H."/>
            <person name="Yamane K."/>
            <person name="Yasumoto K."/>
            <person name="Yata K."/>
            <person name="Yoshida K."/>
            <person name="Yoshikawa H.-F."/>
            <person name="Zumstein E."/>
            <person name="Yoshikawa H."/>
            <person name="Danchin A."/>
        </authorList>
    </citation>
    <scope>NUCLEOTIDE SEQUENCE [LARGE SCALE GENOMIC DNA]</scope>
    <source>
        <strain>168</strain>
    </source>
</reference>
<reference key="3">
    <citation type="journal article" date="2007" name="Appl. Environ. Microbiol.">
        <title>Changing a single amino acid in Clostridium perfringens beta-toxin affects the efficiency of heterologous secretion by Bacillus subtilis.</title>
        <authorList>
            <person name="Nijland R."/>
            <person name="Heerlien R."/>
            <person name="Hamoen L.W."/>
            <person name="Kuipers O.P."/>
        </authorList>
    </citation>
    <scope>INDUCTION</scope>
    <scope>DISRUPTION PHENOTYPE</scope>
    <scope>OVEREXPRESSION</scope>
    <source>
        <strain>168</strain>
    </source>
</reference>
<reference key="4">
    <citation type="journal article" date="2007" name="Appl. Environ. Microbiol.">
        <title>Production and secretion stress caused by overexpression of heterologous alpha-amylase leads to inhibition of sporulation and a prolonged motile phase in Bacillus subtilis.</title>
        <authorList>
            <person name="Lulko A.T."/>
            <person name="Veening J.-W."/>
            <person name="Buist G."/>
            <person name="Smits W.K."/>
            <person name="Blom E.J."/>
            <person name="Beekman A.C."/>
            <person name="Bron S."/>
            <person name="Kuipers O.P."/>
        </authorList>
    </citation>
    <scope>DEVELOPMENTAL STAGE</scope>
    <scope>INDUCTION</scope>
    <source>
        <strain>168</strain>
    </source>
</reference>
<keyword id="KW-1185">Reference proteome</keyword>
<keyword id="KW-0732">Signal</keyword>